<reference key="1">
    <citation type="journal article" date="2003" name="Proc. Natl. Acad. Sci. U.S.A.">
        <title>Complete genome sequence of the marine planctomycete Pirellula sp. strain 1.</title>
        <authorList>
            <person name="Gloeckner F.O."/>
            <person name="Kube M."/>
            <person name="Bauer M."/>
            <person name="Teeling H."/>
            <person name="Lombardot T."/>
            <person name="Ludwig W."/>
            <person name="Gade D."/>
            <person name="Beck A."/>
            <person name="Borzym K."/>
            <person name="Heitmann K."/>
            <person name="Rabus R."/>
            <person name="Schlesner H."/>
            <person name="Amann R."/>
            <person name="Reinhardt R."/>
        </authorList>
    </citation>
    <scope>NUCLEOTIDE SEQUENCE [LARGE SCALE GENOMIC DNA]</scope>
    <source>
        <strain>DSM 10527 / NCIMB 13988 / SH1</strain>
    </source>
</reference>
<evidence type="ECO:0000255" key="1">
    <source>
        <dbReference type="HAMAP-Rule" id="MF_00159"/>
    </source>
</evidence>
<protein>
    <recommendedName>
        <fullName evidence="1">4-hydroxy-3-methylbut-2-en-1-yl diphosphate synthase (flavodoxin)</fullName>
        <ecNumber evidence="1">1.17.7.3</ecNumber>
    </recommendedName>
    <alternativeName>
        <fullName evidence="1">1-hydroxy-2-methyl-2-(E)-butenyl 4-diphosphate synthase</fullName>
    </alternativeName>
</protein>
<feature type="chain" id="PRO_0000190624" description="4-hydroxy-3-methylbut-2-en-1-yl diphosphate synthase (flavodoxin)">
    <location>
        <begin position="1"/>
        <end position="382"/>
    </location>
</feature>
<feature type="binding site" evidence="1">
    <location>
        <position position="290"/>
    </location>
    <ligand>
        <name>[4Fe-4S] cluster</name>
        <dbReference type="ChEBI" id="CHEBI:49883"/>
    </ligand>
</feature>
<feature type="binding site" evidence="1">
    <location>
        <position position="293"/>
    </location>
    <ligand>
        <name>[4Fe-4S] cluster</name>
        <dbReference type="ChEBI" id="CHEBI:49883"/>
    </ligand>
</feature>
<feature type="binding site" evidence="1">
    <location>
        <position position="327"/>
    </location>
    <ligand>
        <name>[4Fe-4S] cluster</name>
        <dbReference type="ChEBI" id="CHEBI:49883"/>
    </ligand>
</feature>
<feature type="binding site" evidence="1">
    <location>
        <position position="334"/>
    </location>
    <ligand>
        <name>[4Fe-4S] cluster</name>
        <dbReference type="ChEBI" id="CHEBI:49883"/>
    </ligand>
</feature>
<sequence length="382" mass="41776">MLSFMKIRRNPTRPVTIGSITIGDGHPIAVQSMTATKTQNIDATVEQAEALHARGAGVVRIAVDSDKDAEALAEIRKQTQANLAVDLQENFRLAEKVAPHVDKIRYNPGHLYHHARELTWQEKVRYLIDTAGSNNCAVRIGVNCGSVDPAKKEKYDHDDSITPMLESALEHCELVDSLGFHNFVVSLKDSDPSKVVQVNTLFAEKRPDVALHLGVTEAGMPPDGIIKTRIAFEQLIGKGIGDTVRVSLTLPNPRKPEEIDAGKQIVEDIHAGRVRSVVKFDDSKLNIISCPSCSRVENEAFIDLAAKVKEMTTFAQEYSITIAVMGCRVNGPGETDDADLGLWCGPAKVNLKRGPEALGAFGYDEILPKLKQELDDLIAAKQ</sequence>
<name>ISPG_RHOBA</name>
<comment type="function">
    <text evidence="1">Converts 2C-methyl-D-erythritol 2,4-cyclodiphosphate (ME-2,4cPP) into 1-hydroxy-2-methyl-2-(E)-butenyl 4-diphosphate.</text>
</comment>
<comment type="catalytic activity">
    <reaction evidence="1">
        <text>(2E)-4-hydroxy-3-methylbut-2-enyl diphosphate + oxidized [flavodoxin] + H2O + 2 H(+) = 2-C-methyl-D-erythritol 2,4-cyclic diphosphate + reduced [flavodoxin]</text>
        <dbReference type="Rhea" id="RHEA:43604"/>
        <dbReference type="Rhea" id="RHEA-COMP:10622"/>
        <dbReference type="Rhea" id="RHEA-COMP:10623"/>
        <dbReference type="ChEBI" id="CHEBI:15377"/>
        <dbReference type="ChEBI" id="CHEBI:15378"/>
        <dbReference type="ChEBI" id="CHEBI:57618"/>
        <dbReference type="ChEBI" id="CHEBI:58210"/>
        <dbReference type="ChEBI" id="CHEBI:58483"/>
        <dbReference type="ChEBI" id="CHEBI:128753"/>
        <dbReference type="EC" id="1.17.7.3"/>
    </reaction>
</comment>
<comment type="cofactor">
    <cofactor evidence="1">
        <name>[4Fe-4S] cluster</name>
        <dbReference type="ChEBI" id="CHEBI:49883"/>
    </cofactor>
    <text evidence="1">Binds 1 [4Fe-4S] cluster.</text>
</comment>
<comment type="pathway">
    <text evidence="1">Isoprenoid biosynthesis; isopentenyl diphosphate biosynthesis via DXP pathway; isopentenyl diphosphate from 1-deoxy-D-xylulose 5-phosphate: step 5/6.</text>
</comment>
<comment type="similarity">
    <text evidence="1">Belongs to the IspG family.</text>
</comment>
<proteinExistence type="inferred from homology"/>
<accession>Q7UWC8</accession>
<gene>
    <name evidence="1" type="primary">ispG</name>
    <name type="synonym">gcpE</name>
    <name type="ordered locus">RB2118</name>
</gene>
<dbReference type="EC" id="1.17.7.3" evidence="1"/>
<dbReference type="EMBL" id="BX294136">
    <property type="protein sequence ID" value="CAD72435.1"/>
    <property type="molecule type" value="Genomic_DNA"/>
</dbReference>
<dbReference type="RefSeq" id="NP_864753.1">
    <property type="nucleotide sequence ID" value="NC_005027.1"/>
</dbReference>
<dbReference type="RefSeq" id="WP_011118672.1">
    <property type="nucleotide sequence ID" value="NC_005027.1"/>
</dbReference>
<dbReference type="SMR" id="Q7UWC8"/>
<dbReference type="FunCoup" id="Q7UWC8">
    <property type="interactions" value="271"/>
</dbReference>
<dbReference type="STRING" id="243090.RB2118"/>
<dbReference type="EnsemblBacteria" id="CAD72435">
    <property type="protein sequence ID" value="CAD72435"/>
    <property type="gene ID" value="RB2118"/>
</dbReference>
<dbReference type="KEGG" id="rba:RB2118"/>
<dbReference type="PATRIC" id="fig|243090.15.peg.969"/>
<dbReference type="eggNOG" id="COG0821">
    <property type="taxonomic scope" value="Bacteria"/>
</dbReference>
<dbReference type="HOGENOM" id="CLU_042258_2_0_0"/>
<dbReference type="InParanoid" id="Q7UWC8"/>
<dbReference type="OrthoDB" id="9803214at2"/>
<dbReference type="UniPathway" id="UPA00056">
    <property type="reaction ID" value="UER00096"/>
</dbReference>
<dbReference type="Proteomes" id="UP000001025">
    <property type="component" value="Chromosome"/>
</dbReference>
<dbReference type="GO" id="GO:0051539">
    <property type="term" value="F:4 iron, 4 sulfur cluster binding"/>
    <property type="evidence" value="ECO:0007669"/>
    <property type="project" value="UniProtKB-UniRule"/>
</dbReference>
<dbReference type="GO" id="GO:0046429">
    <property type="term" value="F:4-hydroxy-3-methylbut-2-en-1-yl diphosphate synthase activity (ferredoxin)"/>
    <property type="evidence" value="ECO:0000318"/>
    <property type="project" value="GO_Central"/>
</dbReference>
<dbReference type="GO" id="GO:0141197">
    <property type="term" value="F:4-hydroxy-3-methylbut-2-enyl-diphosphate synthase activity (flavodoxin)"/>
    <property type="evidence" value="ECO:0007669"/>
    <property type="project" value="UniProtKB-EC"/>
</dbReference>
<dbReference type="GO" id="GO:0005506">
    <property type="term" value="F:iron ion binding"/>
    <property type="evidence" value="ECO:0007669"/>
    <property type="project" value="InterPro"/>
</dbReference>
<dbReference type="GO" id="GO:0019288">
    <property type="term" value="P:isopentenyl diphosphate biosynthetic process, methylerythritol 4-phosphate pathway"/>
    <property type="evidence" value="ECO:0000318"/>
    <property type="project" value="GO_Central"/>
</dbReference>
<dbReference type="GO" id="GO:0016114">
    <property type="term" value="P:terpenoid biosynthetic process"/>
    <property type="evidence" value="ECO:0007669"/>
    <property type="project" value="InterPro"/>
</dbReference>
<dbReference type="FunFam" id="3.20.20.20:FF:000032">
    <property type="entry name" value="4-hydroxy-3-methylbut-2-en-1-yl diphosphate synthase (flavodoxin)"/>
    <property type="match status" value="1"/>
</dbReference>
<dbReference type="Gene3D" id="3.20.20.20">
    <property type="entry name" value="Dihydropteroate synthase-like"/>
    <property type="match status" value="1"/>
</dbReference>
<dbReference type="Gene3D" id="3.30.413.10">
    <property type="entry name" value="Sulfite Reductase Hemoprotein, domain 1"/>
    <property type="match status" value="1"/>
</dbReference>
<dbReference type="HAMAP" id="MF_00159">
    <property type="entry name" value="IspG"/>
    <property type="match status" value="1"/>
</dbReference>
<dbReference type="InterPro" id="IPR011005">
    <property type="entry name" value="Dihydropteroate_synth-like_sf"/>
</dbReference>
<dbReference type="InterPro" id="IPR016425">
    <property type="entry name" value="IspG_bac"/>
</dbReference>
<dbReference type="InterPro" id="IPR004588">
    <property type="entry name" value="IspG_bac-typ"/>
</dbReference>
<dbReference type="InterPro" id="IPR045854">
    <property type="entry name" value="NO2/SO3_Rdtase_4Fe4S_sf"/>
</dbReference>
<dbReference type="NCBIfam" id="TIGR00612">
    <property type="entry name" value="ispG_gcpE"/>
    <property type="match status" value="1"/>
</dbReference>
<dbReference type="PANTHER" id="PTHR30454">
    <property type="entry name" value="4-HYDROXY-3-METHYLBUT-2-EN-1-YL DIPHOSPHATE SYNTHASE"/>
    <property type="match status" value="1"/>
</dbReference>
<dbReference type="PANTHER" id="PTHR30454:SF0">
    <property type="entry name" value="4-HYDROXY-3-METHYLBUT-2-EN-1-YL DIPHOSPHATE SYNTHASE (FERREDOXIN), CHLOROPLASTIC"/>
    <property type="match status" value="1"/>
</dbReference>
<dbReference type="Pfam" id="PF04551">
    <property type="entry name" value="GcpE"/>
    <property type="match status" value="1"/>
</dbReference>
<dbReference type="PIRSF" id="PIRSF004640">
    <property type="entry name" value="IspG"/>
    <property type="match status" value="1"/>
</dbReference>
<organism>
    <name type="scientific">Rhodopirellula baltica (strain DSM 10527 / NCIMB 13988 / SH1)</name>
    <dbReference type="NCBI Taxonomy" id="243090"/>
    <lineage>
        <taxon>Bacteria</taxon>
        <taxon>Pseudomonadati</taxon>
        <taxon>Planctomycetota</taxon>
        <taxon>Planctomycetia</taxon>
        <taxon>Pirellulales</taxon>
        <taxon>Pirellulaceae</taxon>
        <taxon>Rhodopirellula</taxon>
    </lineage>
</organism>
<keyword id="KW-0004">4Fe-4S</keyword>
<keyword id="KW-0408">Iron</keyword>
<keyword id="KW-0411">Iron-sulfur</keyword>
<keyword id="KW-0414">Isoprene biosynthesis</keyword>
<keyword id="KW-0479">Metal-binding</keyword>
<keyword id="KW-0560">Oxidoreductase</keyword>
<keyword id="KW-1185">Reference proteome</keyword>